<gene>
    <name type="primary">RUFY2</name>
</gene>
<dbReference type="EMBL" id="CR860792">
    <property type="protein sequence ID" value="CAH92902.1"/>
    <property type="molecule type" value="mRNA"/>
</dbReference>
<dbReference type="RefSeq" id="NP_001126704.1">
    <property type="nucleotide sequence ID" value="NM_001133232.1"/>
</dbReference>
<dbReference type="SMR" id="Q5R5R4"/>
<dbReference type="FunCoup" id="Q5R5R4">
    <property type="interactions" value="2762"/>
</dbReference>
<dbReference type="STRING" id="9601.ENSPPYP00000002782"/>
<dbReference type="GeneID" id="100173704"/>
<dbReference type="KEGG" id="pon:100173704"/>
<dbReference type="CTD" id="55680"/>
<dbReference type="InParanoid" id="Q5R5R4"/>
<dbReference type="OrthoDB" id="79871at2759"/>
<dbReference type="Proteomes" id="UP000001595">
    <property type="component" value="Unplaced"/>
</dbReference>
<dbReference type="GO" id="GO:0005737">
    <property type="term" value="C:cytoplasm"/>
    <property type="evidence" value="ECO:0007669"/>
    <property type="project" value="TreeGrafter"/>
</dbReference>
<dbReference type="GO" id="GO:0005634">
    <property type="term" value="C:nucleus"/>
    <property type="evidence" value="ECO:0007669"/>
    <property type="project" value="UniProtKB-SubCell"/>
</dbReference>
<dbReference type="GO" id="GO:0008270">
    <property type="term" value="F:zinc ion binding"/>
    <property type="evidence" value="ECO:0007669"/>
    <property type="project" value="UniProtKB-KW"/>
</dbReference>
<dbReference type="CDD" id="cd15759">
    <property type="entry name" value="FYVE_RUFY2"/>
    <property type="match status" value="1"/>
</dbReference>
<dbReference type="CDD" id="cd17695">
    <property type="entry name" value="RUN_RUFY2"/>
    <property type="match status" value="1"/>
</dbReference>
<dbReference type="FunFam" id="1.20.58.900:FF:000001">
    <property type="entry name" value="RUN and FYVE domain containing 2"/>
    <property type="match status" value="1"/>
</dbReference>
<dbReference type="FunFam" id="3.30.40.10:FF:000046">
    <property type="entry name" value="RUN and FYVE domain containing 2"/>
    <property type="match status" value="1"/>
</dbReference>
<dbReference type="FunFam" id="1.20.5.170:FF:000030">
    <property type="entry name" value="RUN and FYVE domain-containing protein 2 isoform X1"/>
    <property type="match status" value="1"/>
</dbReference>
<dbReference type="Gene3D" id="1.20.5.170">
    <property type="match status" value="1"/>
</dbReference>
<dbReference type="Gene3D" id="1.20.58.900">
    <property type="match status" value="1"/>
</dbReference>
<dbReference type="Gene3D" id="3.30.40.10">
    <property type="entry name" value="Zinc/RING finger domain, C3HC4 (zinc finger)"/>
    <property type="match status" value="1"/>
</dbReference>
<dbReference type="InterPro" id="IPR047333">
    <property type="entry name" value="FYVE_RUFY2"/>
</dbReference>
<dbReference type="InterPro" id="IPR047335">
    <property type="entry name" value="RUFY1-3"/>
</dbReference>
<dbReference type="InterPro" id="IPR004012">
    <property type="entry name" value="Run_dom"/>
</dbReference>
<dbReference type="InterPro" id="IPR037213">
    <property type="entry name" value="Run_dom_sf"/>
</dbReference>
<dbReference type="InterPro" id="IPR047332">
    <property type="entry name" value="RUN_RUFY2"/>
</dbReference>
<dbReference type="InterPro" id="IPR000306">
    <property type="entry name" value="Znf_FYVE"/>
</dbReference>
<dbReference type="InterPro" id="IPR017455">
    <property type="entry name" value="Znf_FYVE-rel"/>
</dbReference>
<dbReference type="InterPro" id="IPR011011">
    <property type="entry name" value="Znf_FYVE_PHD"/>
</dbReference>
<dbReference type="InterPro" id="IPR013083">
    <property type="entry name" value="Znf_RING/FYVE/PHD"/>
</dbReference>
<dbReference type="PANTHER" id="PTHR45956:SF3">
    <property type="entry name" value="RUN AND FYVE DOMAIN-CONTAINING PROTEIN 2"/>
    <property type="match status" value="1"/>
</dbReference>
<dbReference type="PANTHER" id="PTHR45956">
    <property type="entry name" value="RUN AND FYVE DOMAIN-CONTAINING PROTEIN 2-LIKE PROTEIN"/>
    <property type="match status" value="1"/>
</dbReference>
<dbReference type="Pfam" id="PF01363">
    <property type="entry name" value="FYVE"/>
    <property type="match status" value="1"/>
</dbReference>
<dbReference type="Pfam" id="PF02759">
    <property type="entry name" value="RUN"/>
    <property type="match status" value="1"/>
</dbReference>
<dbReference type="SMART" id="SM00064">
    <property type="entry name" value="FYVE"/>
    <property type="match status" value="1"/>
</dbReference>
<dbReference type="SMART" id="SM00593">
    <property type="entry name" value="RUN"/>
    <property type="match status" value="1"/>
</dbReference>
<dbReference type="SUPFAM" id="SSF57903">
    <property type="entry name" value="FYVE/PHD zinc finger"/>
    <property type="match status" value="1"/>
</dbReference>
<dbReference type="SUPFAM" id="SSF140741">
    <property type="entry name" value="RUN domain-like"/>
    <property type="match status" value="1"/>
</dbReference>
<dbReference type="PROSITE" id="PS50826">
    <property type="entry name" value="RUN"/>
    <property type="match status" value="1"/>
</dbReference>
<dbReference type="PROSITE" id="PS50178">
    <property type="entry name" value="ZF_FYVE"/>
    <property type="match status" value="1"/>
</dbReference>
<reference key="1">
    <citation type="submission" date="2004-11" db="EMBL/GenBank/DDBJ databases">
        <authorList>
            <consortium name="The German cDNA consortium"/>
        </authorList>
    </citation>
    <scope>NUCLEOTIDE SEQUENCE [LARGE SCALE MRNA]</scope>
    <source>
        <tissue>Brain cortex</tissue>
    </source>
</reference>
<evidence type="ECO:0000250" key="1"/>
<evidence type="ECO:0000255" key="2"/>
<evidence type="ECO:0000255" key="3">
    <source>
        <dbReference type="PROSITE-ProRule" id="PRU00091"/>
    </source>
</evidence>
<evidence type="ECO:0000255" key="4">
    <source>
        <dbReference type="PROSITE-ProRule" id="PRU00178"/>
    </source>
</evidence>
<proteinExistence type="evidence at transcript level"/>
<feature type="chain" id="PRO_0000245832" description="RUN and FYVE domain-containing protein 2">
    <location>
        <begin position="1"/>
        <end position="606"/>
    </location>
</feature>
<feature type="domain" description="RUN" evidence="4">
    <location>
        <begin position="37"/>
        <end position="169"/>
    </location>
</feature>
<feature type="zinc finger region" description="FYVE-type" evidence="3">
    <location>
        <begin position="540"/>
        <end position="598"/>
    </location>
</feature>
<feature type="coiled-coil region" evidence="2">
    <location>
        <begin position="210"/>
        <end position="534"/>
    </location>
</feature>
<feature type="binding site" evidence="3">
    <location>
        <position position="546"/>
    </location>
    <ligand>
        <name>Zn(2+)</name>
        <dbReference type="ChEBI" id="CHEBI:29105"/>
        <label>1</label>
    </ligand>
</feature>
<feature type="binding site" evidence="3">
    <location>
        <position position="549"/>
    </location>
    <ligand>
        <name>Zn(2+)</name>
        <dbReference type="ChEBI" id="CHEBI:29105"/>
        <label>1</label>
    </ligand>
</feature>
<feature type="binding site" evidence="3">
    <location>
        <position position="562"/>
    </location>
    <ligand>
        <name>Zn(2+)</name>
        <dbReference type="ChEBI" id="CHEBI:29105"/>
        <label>2</label>
    </ligand>
</feature>
<feature type="binding site" evidence="3">
    <location>
        <position position="565"/>
    </location>
    <ligand>
        <name>Zn(2+)</name>
        <dbReference type="ChEBI" id="CHEBI:29105"/>
        <label>2</label>
    </ligand>
</feature>
<feature type="binding site" evidence="3">
    <location>
        <position position="570"/>
    </location>
    <ligand>
        <name>Zn(2+)</name>
        <dbReference type="ChEBI" id="CHEBI:29105"/>
        <label>1</label>
    </ligand>
</feature>
<feature type="binding site" evidence="3">
    <location>
        <position position="573"/>
    </location>
    <ligand>
        <name>Zn(2+)</name>
        <dbReference type="ChEBI" id="CHEBI:29105"/>
        <label>1</label>
    </ligand>
</feature>
<feature type="binding site" evidence="3">
    <location>
        <position position="590"/>
    </location>
    <ligand>
        <name>Zn(2+)</name>
        <dbReference type="ChEBI" id="CHEBI:29105"/>
        <label>2</label>
    </ligand>
</feature>
<feature type="binding site" evidence="3">
    <location>
        <position position="593"/>
    </location>
    <ligand>
        <name>Zn(2+)</name>
        <dbReference type="ChEBI" id="CHEBI:29105"/>
        <label>2</label>
    </ligand>
</feature>
<organism>
    <name type="scientific">Pongo abelii</name>
    <name type="common">Sumatran orangutan</name>
    <name type="synonym">Pongo pygmaeus abelii</name>
    <dbReference type="NCBI Taxonomy" id="9601"/>
    <lineage>
        <taxon>Eukaryota</taxon>
        <taxon>Metazoa</taxon>
        <taxon>Chordata</taxon>
        <taxon>Craniata</taxon>
        <taxon>Vertebrata</taxon>
        <taxon>Euteleostomi</taxon>
        <taxon>Mammalia</taxon>
        <taxon>Eutheria</taxon>
        <taxon>Euarchontoglires</taxon>
        <taxon>Primates</taxon>
        <taxon>Haplorrhini</taxon>
        <taxon>Catarrhini</taxon>
        <taxon>Hominidae</taxon>
        <taxon>Pongo</taxon>
    </lineage>
</organism>
<name>RUFY2_PONAB</name>
<keyword id="KW-0175">Coiled coil</keyword>
<keyword id="KW-0479">Metal-binding</keyword>
<keyword id="KW-0539">Nucleus</keyword>
<keyword id="KW-1185">Reference proteome</keyword>
<keyword id="KW-0862">Zinc</keyword>
<keyword id="KW-0863">Zinc-finger</keyword>
<protein>
    <recommendedName>
        <fullName>RUN and FYVE domain-containing protein 2</fullName>
    </recommendedName>
</protein>
<sequence length="606" mass="70037">MATKDPTAVERANLLNMAKLSIKGLIESALSFGRTLDSDYPPLQQFFVVMEHCLKHGLKVRKSFLSYNKTIWGPLELVEKLYPEAEEIGASVRDLPGLKTPLGRARAWLRLALMQKKMADYLRCLIIQRDLLSEFYEYHALMMEEEGAVIVGLLVGLNVIDANLCVKGEDLDSQVGVIDFSMYLKNEEDIGNKERNVQIAAILDQKNYVEELNRQLNSTVSSLHSRVDSLEKSNTKLIEELAIAKNNIIKLQEENHQLRNENKLILMKTQQHIEVTKVDVETELQTYKHSRQGLDEMYNEARRQLRDESQLRQDVENELAVQVSMKHEIELAMKLLEKDIHEKQDTLIGLRQQLEEVKAINIEMYQKLQGSEDGLKEKNEIIARLEEKTNKITAAMRQLEQRLQQAEKAQMEAEDEDEKYLQECLSKSDSLQKQISQKEKQLVQLETDLKIEKEWRQTLQEDLQKEKDALSHLRNETQQIISLKKEFLNLQDENQQLKKIYHEQEQALQELGNKLSESKLKIEDIKEANKALQGLVWLKDKEATHCKLCEKEFSLSKRKHHCRNCGEIFCNACSDNELPLPSSPKPVRVCDSCHALLIQRCSSNLP</sequence>
<comment type="subunit">
    <text evidence="1">Interacts with BMX.</text>
</comment>
<comment type="subcellular location">
    <subcellularLocation>
        <location evidence="1">Nucleus</location>
    </subcellularLocation>
</comment>
<accession>Q5R5R4</accession>